<name>METK_BACAH</name>
<protein>
    <recommendedName>
        <fullName evidence="1">S-adenosylmethionine synthase</fullName>
        <shortName evidence="1">AdoMet synthase</shortName>
        <ecNumber evidence="1">2.5.1.6</ecNumber>
    </recommendedName>
    <alternativeName>
        <fullName evidence="1">MAT</fullName>
    </alternativeName>
    <alternativeName>
        <fullName evidence="1">Methionine adenosyltransferase</fullName>
    </alternativeName>
</protein>
<accession>A0RJZ7</accession>
<proteinExistence type="inferred from homology"/>
<evidence type="ECO:0000255" key="1">
    <source>
        <dbReference type="HAMAP-Rule" id="MF_00086"/>
    </source>
</evidence>
<gene>
    <name evidence="1" type="primary">metK</name>
    <name type="ordered locus">BALH_4340</name>
</gene>
<dbReference type="EC" id="2.5.1.6" evidence="1"/>
<dbReference type="EMBL" id="CP000485">
    <property type="protein sequence ID" value="ABK87540.1"/>
    <property type="molecule type" value="Genomic_DNA"/>
</dbReference>
<dbReference type="RefSeq" id="WP_000163126.1">
    <property type="nucleotide sequence ID" value="NC_008600.1"/>
</dbReference>
<dbReference type="SMR" id="A0RJZ7"/>
<dbReference type="KEGG" id="btl:BALH_4340"/>
<dbReference type="HOGENOM" id="CLU_041802_1_1_9"/>
<dbReference type="UniPathway" id="UPA00315">
    <property type="reaction ID" value="UER00080"/>
</dbReference>
<dbReference type="GO" id="GO:0005737">
    <property type="term" value="C:cytoplasm"/>
    <property type="evidence" value="ECO:0007669"/>
    <property type="project" value="UniProtKB-SubCell"/>
</dbReference>
<dbReference type="GO" id="GO:0005524">
    <property type="term" value="F:ATP binding"/>
    <property type="evidence" value="ECO:0007669"/>
    <property type="project" value="UniProtKB-UniRule"/>
</dbReference>
<dbReference type="GO" id="GO:0000287">
    <property type="term" value="F:magnesium ion binding"/>
    <property type="evidence" value="ECO:0007669"/>
    <property type="project" value="UniProtKB-UniRule"/>
</dbReference>
<dbReference type="GO" id="GO:0004478">
    <property type="term" value="F:methionine adenosyltransferase activity"/>
    <property type="evidence" value="ECO:0007669"/>
    <property type="project" value="UniProtKB-UniRule"/>
</dbReference>
<dbReference type="GO" id="GO:0006730">
    <property type="term" value="P:one-carbon metabolic process"/>
    <property type="evidence" value="ECO:0007669"/>
    <property type="project" value="UniProtKB-KW"/>
</dbReference>
<dbReference type="GO" id="GO:0006556">
    <property type="term" value="P:S-adenosylmethionine biosynthetic process"/>
    <property type="evidence" value="ECO:0007669"/>
    <property type="project" value="UniProtKB-UniRule"/>
</dbReference>
<dbReference type="CDD" id="cd18079">
    <property type="entry name" value="S-AdoMet_synt"/>
    <property type="match status" value="1"/>
</dbReference>
<dbReference type="FunFam" id="3.30.300.10:FF:000003">
    <property type="entry name" value="S-adenosylmethionine synthase"/>
    <property type="match status" value="1"/>
</dbReference>
<dbReference type="FunFam" id="3.30.300.10:FF:000004">
    <property type="entry name" value="S-adenosylmethionine synthase"/>
    <property type="match status" value="1"/>
</dbReference>
<dbReference type="Gene3D" id="3.30.300.10">
    <property type="match status" value="3"/>
</dbReference>
<dbReference type="HAMAP" id="MF_00086">
    <property type="entry name" value="S_AdoMet_synth1"/>
    <property type="match status" value="1"/>
</dbReference>
<dbReference type="InterPro" id="IPR022631">
    <property type="entry name" value="ADOMET_SYNTHASE_CS"/>
</dbReference>
<dbReference type="InterPro" id="IPR022630">
    <property type="entry name" value="S-AdoMet_synt_C"/>
</dbReference>
<dbReference type="InterPro" id="IPR022629">
    <property type="entry name" value="S-AdoMet_synt_central"/>
</dbReference>
<dbReference type="InterPro" id="IPR022628">
    <property type="entry name" value="S-AdoMet_synt_N"/>
</dbReference>
<dbReference type="InterPro" id="IPR002133">
    <property type="entry name" value="S-AdoMet_synthetase"/>
</dbReference>
<dbReference type="InterPro" id="IPR022636">
    <property type="entry name" value="S-AdoMet_synthetase_sfam"/>
</dbReference>
<dbReference type="NCBIfam" id="TIGR01034">
    <property type="entry name" value="metK"/>
    <property type="match status" value="1"/>
</dbReference>
<dbReference type="PANTHER" id="PTHR11964">
    <property type="entry name" value="S-ADENOSYLMETHIONINE SYNTHETASE"/>
    <property type="match status" value="1"/>
</dbReference>
<dbReference type="Pfam" id="PF02773">
    <property type="entry name" value="S-AdoMet_synt_C"/>
    <property type="match status" value="1"/>
</dbReference>
<dbReference type="Pfam" id="PF02772">
    <property type="entry name" value="S-AdoMet_synt_M"/>
    <property type="match status" value="1"/>
</dbReference>
<dbReference type="Pfam" id="PF00438">
    <property type="entry name" value="S-AdoMet_synt_N"/>
    <property type="match status" value="1"/>
</dbReference>
<dbReference type="PIRSF" id="PIRSF000497">
    <property type="entry name" value="MAT"/>
    <property type="match status" value="1"/>
</dbReference>
<dbReference type="SUPFAM" id="SSF55973">
    <property type="entry name" value="S-adenosylmethionine synthetase"/>
    <property type="match status" value="3"/>
</dbReference>
<dbReference type="PROSITE" id="PS00376">
    <property type="entry name" value="ADOMET_SYNTHASE_1"/>
    <property type="match status" value="1"/>
</dbReference>
<dbReference type="PROSITE" id="PS00377">
    <property type="entry name" value="ADOMET_SYNTHASE_2"/>
    <property type="match status" value="1"/>
</dbReference>
<sequence>MTKKRHLFTSESVTEGHPDKICDQISDSILDAILSKDANARVACETTVTTGLVLVAGEITTSTYVDIPKIVRETIQGIGYTRAKYGFDAETCAVLTSIDEQSADIAMGVDQALEAREGQMTDAEIEAIGAGDQGLMFGFACNETQELMPLPISLAHKLARRLTEVRKNDTLSYLRPDGKTQVTVEYDENGKPVRVDTIVISTQHHPDVTWEEIDRDLKEHVIKAVVPAELIDGETKFFINPTGRFVIGGPQGDAGLTGRKIIVDTYGGYARHGGGAFSGKDATKVDRSAAYAARYVAKNIVAAGLAEKAEVQLAYAIGVAQPVSISVDTFGTGKVSEDVLVELVRNNFDLRPAGIIKMLDLRRPIYKQTAAYGHFGRTDVDLSWERTDKAVALKEQAGL</sequence>
<feature type="chain" id="PRO_0000302893" description="S-adenosylmethionine synthase">
    <location>
        <begin position="1"/>
        <end position="399"/>
    </location>
</feature>
<feature type="region of interest" description="Flexible loop" evidence="1">
    <location>
        <begin position="101"/>
        <end position="111"/>
    </location>
</feature>
<feature type="binding site" description="in other chain" evidence="1">
    <location>
        <position position="17"/>
    </location>
    <ligand>
        <name>ATP</name>
        <dbReference type="ChEBI" id="CHEBI:30616"/>
        <note>ligand shared between two neighboring subunits</note>
    </ligand>
</feature>
<feature type="binding site" evidence="1">
    <location>
        <position position="19"/>
    </location>
    <ligand>
        <name>Mg(2+)</name>
        <dbReference type="ChEBI" id="CHEBI:18420"/>
    </ligand>
</feature>
<feature type="binding site" evidence="1">
    <location>
        <position position="45"/>
    </location>
    <ligand>
        <name>K(+)</name>
        <dbReference type="ChEBI" id="CHEBI:29103"/>
    </ligand>
</feature>
<feature type="binding site" description="in other chain" evidence="1">
    <location>
        <position position="58"/>
    </location>
    <ligand>
        <name>L-methionine</name>
        <dbReference type="ChEBI" id="CHEBI:57844"/>
        <note>ligand shared between two neighboring subunits</note>
    </ligand>
</feature>
<feature type="binding site" description="in other chain" evidence="1">
    <location>
        <position position="101"/>
    </location>
    <ligand>
        <name>L-methionine</name>
        <dbReference type="ChEBI" id="CHEBI:57844"/>
        <note>ligand shared between two neighboring subunits</note>
    </ligand>
</feature>
<feature type="binding site" description="in other chain" evidence="1">
    <location>
        <begin position="177"/>
        <end position="179"/>
    </location>
    <ligand>
        <name>ATP</name>
        <dbReference type="ChEBI" id="CHEBI:30616"/>
        <note>ligand shared between two neighboring subunits</note>
    </ligand>
</feature>
<feature type="binding site" description="in other chain" evidence="1">
    <location>
        <begin position="244"/>
        <end position="245"/>
    </location>
    <ligand>
        <name>ATP</name>
        <dbReference type="ChEBI" id="CHEBI:30616"/>
        <note>ligand shared between two neighboring subunits</note>
    </ligand>
</feature>
<feature type="binding site" evidence="1">
    <location>
        <position position="253"/>
    </location>
    <ligand>
        <name>ATP</name>
        <dbReference type="ChEBI" id="CHEBI:30616"/>
        <note>ligand shared between two neighboring subunits</note>
    </ligand>
</feature>
<feature type="binding site" evidence="1">
    <location>
        <position position="253"/>
    </location>
    <ligand>
        <name>L-methionine</name>
        <dbReference type="ChEBI" id="CHEBI:57844"/>
        <note>ligand shared between two neighboring subunits</note>
    </ligand>
</feature>
<feature type="binding site" description="in other chain" evidence="1">
    <location>
        <begin position="259"/>
        <end position="260"/>
    </location>
    <ligand>
        <name>ATP</name>
        <dbReference type="ChEBI" id="CHEBI:30616"/>
        <note>ligand shared between two neighboring subunits</note>
    </ligand>
</feature>
<feature type="binding site" evidence="1">
    <location>
        <position position="276"/>
    </location>
    <ligand>
        <name>ATP</name>
        <dbReference type="ChEBI" id="CHEBI:30616"/>
        <note>ligand shared between two neighboring subunits</note>
    </ligand>
</feature>
<feature type="binding site" evidence="1">
    <location>
        <position position="280"/>
    </location>
    <ligand>
        <name>ATP</name>
        <dbReference type="ChEBI" id="CHEBI:30616"/>
        <note>ligand shared between two neighboring subunits</note>
    </ligand>
</feature>
<feature type="binding site" description="in other chain" evidence="1">
    <location>
        <position position="284"/>
    </location>
    <ligand>
        <name>L-methionine</name>
        <dbReference type="ChEBI" id="CHEBI:57844"/>
        <note>ligand shared between two neighboring subunits</note>
    </ligand>
</feature>
<comment type="function">
    <text evidence="1">Catalyzes the formation of S-adenosylmethionine (AdoMet) from methionine and ATP. The overall synthetic reaction is composed of two sequential steps, AdoMet formation and the subsequent tripolyphosphate hydrolysis which occurs prior to release of AdoMet from the enzyme.</text>
</comment>
<comment type="catalytic activity">
    <reaction evidence="1">
        <text>L-methionine + ATP + H2O = S-adenosyl-L-methionine + phosphate + diphosphate</text>
        <dbReference type="Rhea" id="RHEA:21080"/>
        <dbReference type="ChEBI" id="CHEBI:15377"/>
        <dbReference type="ChEBI" id="CHEBI:30616"/>
        <dbReference type="ChEBI" id="CHEBI:33019"/>
        <dbReference type="ChEBI" id="CHEBI:43474"/>
        <dbReference type="ChEBI" id="CHEBI:57844"/>
        <dbReference type="ChEBI" id="CHEBI:59789"/>
        <dbReference type="EC" id="2.5.1.6"/>
    </reaction>
</comment>
<comment type="cofactor">
    <cofactor evidence="1">
        <name>Mg(2+)</name>
        <dbReference type="ChEBI" id="CHEBI:18420"/>
    </cofactor>
    <text evidence="1">Binds 2 divalent ions per subunit.</text>
</comment>
<comment type="cofactor">
    <cofactor evidence="1">
        <name>K(+)</name>
        <dbReference type="ChEBI" id="CHEBI:29103"/>
    </cofactor>
    <text evidence="1">Binds 1 potassium ion per subunit.</text>
</comment>
<comment type="pathway">
    <text evidence="1">Amino-acid biosynthesis; S-adenosyl-L-methionine biosynthesis; S-adenosyl-L-methionine from L-methionine: step 1/1.</text>
</comment>
<comment type="subunit">
    <text evidence="1">Homotetramer; dimer of dimers.</text>
</comment>
<comment type="subcellular location">
    <subcellularLocation>
        <location evidence="1">Cytoplasm</location>
    </subcellularLocation>
</comment>
<comment type="similarity">
    <text evidence="1">Belongs to the AdoMet synthase family.</text>
</comment>
<reference key="1">
    <citation type="journal article" date="2007" name="J. Bacteriol.">
        <title>The complete genome sequence of Bacillus thuringiensis Al Hakam.</title>
        <authorList>
            <person name="Challacombe J.F."/>
            <person name="Altherr M.R."/>
            <person name="Xie G."/>
            <person name="Bhotika S.S."/>
            <person name="Brown N."/>
            <person name="Bruce D."/>
            <person name="Campbell C.S."/>
            <person name="Campbell M.L."/>
            <person name="Chen J."/>
            <person name="Chertkov O."/>
            <person name="Cleland C."/>
            <person name="Dimitrijevic M."/>
            <person name="Doggett N.A."/>
            <person name="Fawcett J.J."/>
            <person name="Glavina T."/>
            <person name="Goodwin L.A."/>
            <person name="Green L.D."/>
            <person name="Han C.S."/>
            <person name="Hill K.K."/>
            <person name="Hitchcock P."/>
            <person name="Jackson P.J."/>
            <person name="Keim P."/>
            <person name="Kewalramani A.R."/>
            <person name="Longmire J."/>
            <person name="Lucas S."/>
            <person name="Malfatti S."/>
            <person name="Martinez D."/>
            <person name="McMurry K."/>
            <person name="Meincke L.J."/>
            <person name="Misra M."/>
            <person name="Moseman B.L."/>
            <person name="Mundt M."/>
            <person name="Munk A.C."/>
            <person name="Okinaka R.T."/>
            <person name="Parson-Quintana B."/>
            <person name="Reilly L.P."/>
            <person name="Richardson P."/>
            <person name="Robinson D.L."/>
            <person name="Saunders E."/>
            <person name="Tapia R."/>
            <person name="Tesmer J.G."/>
            <person name="Thayer N."/>
            <person name="Thompson L.S."/>
            <person name="Tice H."/>
            <person name="Ticknor L.O."/>
            <person name="Wills P.L."/>
            <person name="Gilna P."/>
            <person name="Brettin T.S."/>
        </authorList>
    </citation>
    <scope>NUCLEOTIDE SEQUENCE [LARGE SCALE GENOMIC DNA]</scope>
    <source>
        <strain>Al Hakam</strain>
    </source>
</reference>
<organism>
    <name type="scientific">Bacillus thuringiensis (strain Al Hakam)</name>
    <dbReference type="NCBI Taxonomy" id="412694"/>
    <lineage>
        <taxon>Bacteria</taxon>
        <taxon>Bacillati</taxon>
        <taxon>Bacillota</taxon>
        <taxon>Bacilli</taxon>
        <taxon>Bacillales</taxon>
        <taxon>Bacillaceae</taxon>
        <taxon>Bacillus</taxon>
        <taxon>Bacillus cereus group</taxon>
    </lineage>
</organism>
<keyword id="KW-0067">ATP-binding</keyword>
<keyword id="KW-0963">Cytoplasm</keyword>
<keyword id="KW-0460">Magnesium</keyword>
<keyword id="KW-0479">Metal-binding</keyword>
<keyword id="KW-0547">Nucleotide-binding</keyword>
<keyword id="KW-0554">One-carbon metabolism</keyword>
<keyword id="KW-0630">Potassium</keyword>
<keyword id="KW-0808">Transferase</keyword>